<protein>
    <recommendedName>
        <fullName>Pterin-4-alpha-carbinolamine dehydratase</fullName>
        <shortName>PHS</shortName>
        <ecNumber>4.2.1.96</ecNumber>
    </recommendedName>
    <alternativeName>
        <fullName>4-alpha-hydroxy-tetrahydropterin dehydratase</fullName>
    </alternativeName>
    <alternativeName>
        <fullName>Pterin carbinolamine dehydratase</fullName>
        <shortName>PCD</shortName>
    </alternativeName>
</protein>
<evidence type="ECO:0000305" key="1"/>
<proteinExistence type="inferred from homology"/>
<comment type="catalytic activity">
    <reaction>
        <text>(4aS,6R)-4a-hydroxy-L-erythro-5,6,7,8-tetrahydrobiopterin = (6R)-L-erythro-6,7-dihydrobiopterin + H2O</text>
        <dbReference type="Rhea" id="RHEA:11920"/>
        <dbReference type="ChEBI" id="CHEBI:15377"/>
        <dbReference type="ChEBI" id="CHEBI:15642"/>
        <dbReference type="ChEBI" id="CHEBI:43120"/>
        <dbReference type="EC" id="4.2.1.96"/>
    </reaction>
</comment>
<comment type="similarity">
    <text evidence="1">Belongs to the pterin-4-alpha-carbinolamine dehydratase family.</text>
</comment>
<gene>
    <name type="primary">Pcd</name>
</gene>
<reference key="1">
    <citation type="journal article" date="2001" name="Mol. Cells">
        <title>Promoter analysis of the Drosophila melanogaster gene encoding the pterin 4alpha-carbinolamine dehydratase.</title>
        <authorList>
            <person name="Park H."/>
            <person name="Seong C."/>
            <person name="Jang J."/>
            <person name="Yoon J."/>
            <person name="Han K."/>
            <person name="Cho N.Y."/>
            <person name="Baek K."/>
        </authorList>
    </citation>
    <scope>NUCLEOTIDE SEQUENCE [GENOMIC DNA]</scope>
</reference>
<name>PHS_DROVI</name>
<accession>P58249</accession>
<organism>
    <name type="scientific">Drosophila virilis</name>
    <name type="common">Fruit fly</name>
    <dbReference type="NCBI Taxonomy" id="7244"/>
    <lineage>
        <taxon>Eukaryota</taxon>
        <taxon>Metazoa</taxon>
        <taxon>Ecdysozoa</taxon>
        <taxon>Arthropoda</taxon>
        <taxon>Hexapoda</taxon>
        <taxon>Insecta</taxon>
        <taxon>Pterygota</taxon>
        <taxon>Neoptera</taxon>
        <taxon>Endopterygota</taxon>
        <taxon>Diptera</taxon>
        <taxon>Brachycera</taxon>
        <taxon>Muscomorpha</taxon>
        <taxon>Ephydroidea</taxon>
        <taxon>Drosophilidae</taxon>
        <taxon>Drosophila</taxon>
    </lineage>
</organism>
<keyword id="KW-0456">Lyase</keyword>
<feature type="chain" id="PRO_0000063062" description="Pterin-4-alpha-carbinolamine dehydratase">
    <location>
        <begin position="1"/>
        <end position="101"/>
    </location>
</feature>
<dbReference type="EC" id="4.2.1.96"/>
<dbReference type="EMBL" id="AF382144">
    <property type="protein sequence ID" value="AAK60268.1"/>
    <property type="molecule type" value="Genomic_DNA"/>
</dbReference>
<dbReference type="SMR" id="P58249"/>
<dbReference type="eggNOG" id="KOG4073">
    <property type="taxonomic scope" value="Eukaryota"/>
</dbReference>
<dbReference type="OrthoDB" id="277398at2759"/>
<dbReference type="GO" id="GO:0008124">
    <property type="term" value="F:4-alpha-hydroxytetrahydrobiopterin dehydratase activity"/>
    <property type="evidence" value="ECO:0007669"/>
    <property type="project" value="UniProtKB-EC"/>
</dbReference>
<dbReference type="GO" id="GO:0006729">
    <property type="term" value="P:tetrahydrobiopterin biosynthetic process"/>
    <property type="evidence" value="ECO:0007669"/>
    <property type="project" value="InterPro"/>
</dbReference>
<dbReference type="CDD" id="cd00914">
    <property type="entry name" value="PCD_DCoH_subfamily_b"/>
    <property type="match status" value="1"/>
</dbReference>
<dbReference type="Gene3D" id="3.30.1360.20">
    <property type="entry name" value="Transcriptional coactivator/pterin dehydratase"/>
    <property type="match status" value="1"/>
</dbReference>
<dbReference type="HAMAP" id="MF_00434">
    <property type="entry name" value="Pterin_4_alpha"/>
    <property type="match status" value="1"/>
</dbReference>
<dbReference type="InterPro" id="IPR036428">
    <property type="entry name" value="PCD_sf"/>
</dbReference>
<dbReference type="InterPro" id="IPR001533">
    <property type="entry name" value="Pterin_deHydtase"/>
</dbReference>
<dbReference type="NCBIfam" id="NF002018">
    <property type="entry name" value="PRK00823.1-3"/>
    <property type="match status" value="1"/>
</dbReference>
<dbReference type="PANTHER" id="PTHR12599">
    <property type="entry name" value="PTERIN-4-ALPHA-CARBINOLAMINE DEHYDRATASE"/>
    <property type="match status" value="1"/>
</dbReference>
<dbReference type="PANTHER" id="PTHR12599:SF0">
    <property type="entry name" value="PTERIN-4-ALPHA-CARBINOLAMINE DEHYDRATASE"/>
    <property type="match status" value="1"/>
</dbReference>
<dbReference type="Pfam" id="PF01329">
    <property type="entry name" value="Pterin_4a"/>
    <property type="match status" value="1"/>
</dbReference>
<dbReference type="SUPFAM" id="SSF55248">
    <property type="entry name" value="PCD-like"/>
    <property type="match status" value="1"/>
</dbReference>
<sequence>MVAKLTEQERVEKLQPLLDAGWCLVEGRDAIYKEFLFKDFNQAFSFMTGVALLAEKMNHHPEWFNVYNKLQVTLSTHDVGGLSSQDIRMATYLETQAKLLH</sequence>